<accession>Q7XTB2</accession>
<accession>Q7X7U3</accession>
<proteinExistence type="evidence at transcript level"/>
<protein>
    <recommendedName>
        <fullName evidence="6">Probable glucuronosyltransferase Os04g0103100</fullName>
        <ecNumber evidence="6">2.4.-.-</ecNumber>
    </recommendedName>
    <alternativeName>
        <fullName evidence="5">OsGT43H</fullName>
    </alternativeName>
</protein>
<keyword id="KW-0961">Cell wall biogenesis/degradation</keyword>
<keyword id="KW-0325">Glycoprotein</keyword>
<keyword id="KW-0328">Glycosyltransferase</keyword>
<keyword id="KW-0333">Golgi apparatus</keyword>
<keyword id="KW-0472">Membrane</keyword>
<keyword id="KW-1185">Reference proteome</keyword>
<keyword id="KW-0735">Signal-anchor</keyword>
<keyword id="KW-0808">Transferase</keyword>
<keyword id="KW-0812">Transmembrane</keyword>
<keyword id="KW-1133">Transmembrane helix</keyword>
<feature type="chain" id="PRO_0000407556" description="Probable glucuronosyltransferase Os04g0103100">
    <location>
        <begin position="1"/>
        <end position="381"/>
    </location>
</feature>
<feature type="topological domain" description="Cytoplasmic" evidence="6">
    <location>
        <begin position="1"/>
        <end position="69"/>
    </location>
</feature>
<feature type="transmembrane region" description="Helical; Signal-anchor for type II membrane protein" evidence="2">
    <location>
        <begin position="70"/>
        <end position="90"/>
    </location>
</feature>
<feature type="topological domain" description="Lumenal" evidence="6">
    <location>
        <begin position="91"/>
        <end position="381"/>
    </location>
</feature>
<feature type="region of interest" description="Disordered" evidence="3">
    <location>
        <begin position="21"/>
        <end position="50"/>
    </location>
</feature>
<feature type="region of interest" description="Disordered" evidence="3">
    <location>
        <begin position="96"/>
        <end position="122"/>
    </location>
</feature>
<feature type="compositionally biased region" description="Low complexity" evidence="3">
    <location>
        <begin position="26"/>
        <end position="46"/>
    </location>
</feature>
<feature type="glycosylation site" description="N-linked (GlcNAc...) asparagine" evidence="2">
    <location>
        <position position="194"/>
    </location>
</feature>
<feature type="glycosylation site" description="N-linked (GlcNAc...) asparagine" evidence="2">
    <location>
        <position position="296"/>
    </location>
</feature>
<comment type="function">
    <text evidence="1">Involved in the synthesis of glucuronoxylan hemicellulose in secondary cell walls.</text>
</comment>
<comment type="subcellular location">
    <subcellularLocation>
        <location evidence="4">Golgi apparatus membrane</location>
        <topology evidence="7">Single-pass type II membrane protein</topology>
    </subcellularLocation>
</comment>
<comment type="similarity">
    <text evidence="6">Belongs to the glycosyltransferase 43 family.</text>
</comment>
<comment type="sequence caution" evidence="6">
    <conflict type="frameshift">
        <sequence resource="EMBL" id="AK070873"/>
    </conflict>
</comment>
<organism>
    <name type="scientific">Oryza sativa subsp. japonica</name>
    <name type="common">Rice</name>
    <dbReference type="NCBI Taxonomy" id="39947"/>
    <lineage>
        <taxon>Eukaryota</taxon>
        <taxon>Viridiplantae</taxon>
        <taxon>Streptophyta</taxon>
        <taxon>Embryophyta</taxon>
        <taxon>Tracheophyta</taxon>
        <taxon>Spermatophyta</taxon>
        <taxon>Magnoliopsida</taxon>
        <taxon>Liliopsida</taxon>
        <taxon>Poales</taxon>
        <taxon>Poaceae</taxon>
        <taxon>BOP clade</taxon>
        <taxon>Oryzoideae</taxon>
        <taxon>Oryzeae</taxon>
        <taxon>Oryzinae</taxon>
        <taxon>Oryza</taxon>
        <taxon>Oryza sativa</taxon>
    </lineage>
</organism>
<evidence type="ECO:0000250" key="1"/>
<evidence type="ECO:0000255" key="2"/>
<evidence type="ECO:0000256" key="3">
    <source>
        <dbReference type="SAM" id="MobiDB-lite"/>
    </source>
</evidence>
<evidence type="ECO:0000269" key="4">
    <source>
    </source>
</evidence>
<evidence type="ECO:0000303" key="5">
    <source>
    </source>
</evidence>
<evidence type="ECO:0000305" key="6"/>
<evidence type="ECO:0000305" key="7">
    <source>
    </source>
</evidence>
<evidence type="ECO:0000312" key="8">
    <source>
        <dbReference type="EMBL" id="BAS87514.1"/>
    </source>
</evidence>
<evidence type="ECO:0000312" key="9">
    <source>
        <dbReference type="EMBL" id="CAD39333.2"/>
    </source>
</evidence>
<evidence type="ECO:0000312" key="10">
    <source>
        <dbReference type="EMBL" id="CAE01585.2"/>
    </source>
</evidence>
<evidence type="ECO:0000312" key="11">
    <source>
        <dbReference type="EMBL" id="EEE60368.1"/>
    </source>
</evidence>
<sequence>MASIRRPHSPAKQQHLLRHGHLGPFASSSPPSSPLRHSSSSSSPRSAAHHHHHLLAAAGHTSFRRPLPRFAAFFLLGSFLGLLHFLSHLPRPLGPIPNPNSHHRHRDPFPILQHPHPPSTPHSNHKLLIVVTPTRARPSQAYYLTRMAHTLRLLHDSPLLWIVVQAGNPTPEAAAALRRTAVLHRYVGCCHNINASAPDFRPHQINAALDIVDNHRLDGVLYFADEEGVYSLHLFHHLRQIRRFATWPVPEISQHTNEVVLQGPVCKQGQVVGWHTTHDGNKLRRFHLAMSGFAFNSTMLWDPKLRSHLAWNSIRHPEMVKESLQGSAFVEQLVEDESQMEGIPADCSQIMNWHVPFGSESVVYPKGWRVATDLDVIIPLK</sequence>
<reference key="1">
    <citation type="journal article" date="2002" name="Nature">
        <title>Sequence and analysis of rice chromosome 4.</title>
        <authorList>
            <person name="Feng Q."/>
            <person name="Zhang Y."/>
            <person name="Hao P."/>
            <person name="Wang S."/>
            <person name="Fu G."/>
            <person name="Huang Y."/>
            <person name="Li Y."/>
            <person name="Zhu J."/>
            <person name="Liu Y."/>
            <person name="Hu X."/>
            <person name="Jia P."/>
            <person name="Zhang Y."/>
            <person name="Zhao Q."/>
            <person name="Ying K."/>
            <person name="Yu S."/>
            <person name="Tang Y."/>
            <person name="Weng Q."/>
            <person name="Zhang L."/>
            <person name="Lu Y."/>
            <person name="Mu J."/>
            <person name="Lu Y."/>
            <person name="Zhang L.S."/>
            <person name="Yu Z."/>
            <person name="Fan D."/>
            <person name="Liu X."/>
            <person name="Lu T."/>
            <person name="Li C."/>
            <person name="Wu Y."/>
            <person name="Sun T."/>
            <person name="Lei H."/>
            <person name="Li T."/>
            <person name="Hu H."/>
            <person name="Guan J."/>
            <person name="Wu M."/>
            <person name="Zhang R."/>
            <person name="Zhou B."/>
            <person name="Chen Z."/>
            <person name="Chen L."/>
            <person name="Jin Z."/>
            <person name="Wang R."/>
            <person name="Yin H."/>
            <person name="Cai Z."/>
            <person name="Ren S."/>
            <person name="Lv G."/>
            <person name="Gu W."/>
            <person name="Zhu G."/>
            <person name="Tu Y."/>
            <person name="Jia J."/>
            <person name="Zhang Y."/>
            <person name="Chen J."/>
            <person name="Kang H."/>
            <person name="Chen X."/>
            <person name="Shao C."/>
            <person name="Sun Y."/>
            <person name="Hu Q."/>
            <person name="Zhang X."/>
            <person name="Zhang W."/>
            <person name="Wang L."/>
            <person name="Ding C."/>
            <person name="Sheng H."/>
            <person name="Gu J."/>
            <person name="Chen S."/>
            <person name="Ni L."/>
            <person name="Zhu F."/>
            <person name="Chen W."/>
            <person name="Lan L."/>
            <person name="Lai Y."/>
            <person name="Cheng Z."/>
            <person name="Gu M."/>
            <person name="Jiang J."/>
            <person name="Li J."/>
            <person name="Hong G."/>
            <person name="Xue Y."/>
            <person name="Han B."/>
        </authorList>
    </citation>
    <scope>NUCLEOTIDE SEQUENCE [LARGE SCALE GENOMIC DNA]</scope>
    <source>
        <strain>cv. Nipponbare</strain>
    </source>
</reference>
<reference key="2">
    <citation type="journal article" date="2005" name="Nature">
        <title>The map-based sequence of the rice genome.</title>
        <authorList>
            <consortium name="International rice genome sequencing project (IRGSP)"/>
        </authorList>
    </citation>
    <scope>NUCLEOTIDE SEQUENCE [LARGE SCALE GENOMIC DNA]</scope>
    <source>
        <strain>cv. Nipponbare</strain>
    </source>
</reference>
<reference key="3">
    <citation type="journal article" date="2008" name="Nucleic Acids Res.">
        <title>The rice annotation project database (RAP-DB): 2008 update.</title>
        <authorList>
            <consortium name="The rice annotation project (RAP)"/>
        </authorList>
    </citation>
    <scope>GENOME REANNOTATION</scope>
    <source>
        <strain>cv. Nipponbare</strain>
    </source>
</reference>
<reference key="4">
    <citation type="journal article" date="2013" name="Rice">
        <title>Improvement of the Oryza sativa Nipponbare reference genome using next generation sequence and optical map data.</title>
        <authorList>
            <person name="Kawahara Y."/>
            <person name="de la Bastide M."/>
            <person name="Hamilton J.P."/>
            <person name="Kanamori H."/>
            <person name="McCombie W.R."/>
            <person name="Ouyang S."/>
            <person name="Schwartz D.C."/>
            <person name="Tanaka T."/>
            <person name="Wu J."/>
            <person name="Zhou S."/>
            <person name="Childs K.L."/>
            <person name="Davidson R.M."/>
            <person name="Lin H."/>
            <person name="Quesada-Ocampo L."/>
            <person name="Vaillancourt B."/>
            <person name="Sakai H."/>
            <person name="Lee S.S."/>
            <person name="Kim J."/>
            <person name="Numa H."/>
            <person name="Itoh T."/>
            <person name="Buell C.R."/>
            <person name="Matsumoto T."/>
        </authorList>
    </citation>
    <scope>GENOME REANNOTATION</scope>
    <source>
        <strain>cv. Nipponbare</strain>
    </source>
</reference>
<reference key="5">
    <citation type="journal article" date="2005" name="PLoS Biol.">
        <title>The genomes of Oryza sativa: a history of duplications.</title>
        <authorList>
            <person name="Yu J."/>
            <person name="Wang J."/>
            <person name="Lin W."/>
            <person name="Li S."/>
            <person name="Li H."/>
            <person name="Zhou J."/>
            <person name="Ni P."/>
            <person name="Dong W."/>
            <person name="Hu S."/>
            <person name="Zeng C."/>
            <person name="Zhang J."/>
            <person name="Zhang Y."/>
            <person name="Li R."/>
            <person name="Xu Z."/>
            <person name="Li S."/>
            <person name="Li X."/>
            <person name="Zheng H."/>
            <person name="Cong L."/>
            <person name="Lin L."/>
            <person name="Yin J."/>
            <person name="Geng J."/>
            <person name="Li G."/>
            <person name="Shi J."/>
            <person name="Liu J."/>
            <person name="Lv H."/>
            <person name="Li J."/>
            <person name="Wang J."/>
            <person name="Deng Y."/>
            <person name="Ran L."/>
            <person name="Shi X."/>
            <person name="Wang X."/>
            <person name="Wu Q."/>
            <person name="Li C."/>
            <person name="Ren X."/>
            <person name="Wang J."/>
            <person name="Wang X."/>
            <person name="Li D."/>
            <person name="Liu D."/>
            <person name="Zhang X."/>
            <person name="Ji Z."/>
            <person name="Zhao W."/>
            <person name="Sun Y."/>
            <person name="Zhang Z."/>
            <person name="Bao J."/>
            <person name="Han Y."/>
            <person name="Dong L."/>
            <person name="Ji J."/>
            <person name="Chen P."/>
            <person name="Wu S."/>
            <person name="Liu J."/>
            <person name="Xiao Y."/>
            <person name="Bu D."/>
            <person name="Tan J."/>
            <person name="Yang L."/>
            <person name="Ye C."/>
            <person name="Zhang J."/>
            <person name="Xu J."/>
            <person name="Zhou Y."/>
            <person name="Yu Y."/>
            <person name="Zhang B."/>
            <person name="Zhuang S."/>
            <person name="Wei H."/>
            <person name="Liu B."/>
            <person name="Lei M."/>
            <person name="Yu H."/>
            <person name="Li Y."/>
            <person name="Xu H."/>
            <person name="Wei S."/>
            <person name="He X."/>
            <person name="Fang L."/>
            <person name="Zhang Z."/>
            <person name="Zhang Y."/>
            <person name="Huang X."/>
            <person name="Su Z."/>
            <person name="Tong W."/>
            <person name="Li J."/>
            <person name="Tong Z."/>
            <person name="Li S."/>
            <person name="Ye J."/>
            <person name="Wang L."/>
            <person name="Fang L."/>
            <person name="Lei T."/>
            <person name="Chen C.-S."/>
            <person name="Chen H.-C."/>
            <person name="Xu Z."/>
            <person name="Li H."/>
            <person name="Huang H."/>
            <person name="Zhang F."/>
            <person name="Xu H."/>
            <person name="Li N."/>
            <person name="Zhao C."/>
            <person name="Li S."/>
            <person name="Dong L."/>
            <person name="Huang Y."/>
            <person name="Li L."/>
            <person name="Xi Y."/>
            <person name="Qi Q."/>
            <person name="Li W."/>
            <person name="Zhang B."/>
            <person name="Hu W."/>
            <person name="Zhang Y."/>
            <person name="Tian X."/>
            <person name="Jiao Y."/>
            <person name="Liang X."/>
            <person name="Jin J."/>
            <person name="Gao L."/>
            <person name="Zheng W."/>
            <person name="Hao B."/>
            <person name="Liu S.-M."/>
            <person name="Wang W."/>
            <person name="Yuan L."/>
            <person name="Cao M."/>
            <person name="McDermott J."/>
            <person name="Samudrala R."/>
            <person name="Wang J."/>
            <person name="Wong G.K.-S."/>
            <person name="Yang H."/>
        </authorList>
    </citation>
    <scope>NUCLEOTIDE SEQUENCE [LARGE SCALE GENOMIC DNA]</scope>
    <source>
        <strain>cv. Nipponbare</strain>
    </source>
</reference>
<reference key="6">
    <citation type="journal article" date="2003" name="Science">
        <title>Collection, mapping, and annotation of over 28,000 cDNA clones from japonica rice.</title>
        <authorList>
            <consortium name="The rice full-length cDNA consortium"/>
        </authorList>
    </citation>
    <scope>NUCLEOTIDE SEQUENCE [LARGE SCALE MRNA]</scope>
    <source>
        <strain>cv. Nipponbare</strain>
    </source>
</reference>
<reference key="7">
    <citation type="journal article" date="2014" name="Plant Signal. Behav.">
        <title>Functional roles of rice glycosyltransferase family GT43 in xylan biosynthesis.</title>
        <authorList>
            <person name="Lee C."/>
            <person name="Teng Q."/>
            <person name="Zhong R."/>
            <person name="Yuan Y."/>
            <person name="Ye Z.H."/>
        </authorList>
    </citation>
    <scope>SUBCELLULAR LOCATION</scope>
</reference>
<name>GT43H_ORYSJ</name>
<gene>
    <name evidence="5" type="primary">GT43H</name>
    <name evidence="8" type="ordered locus">Os04g0103100</name>
    <name evidence="6" type="ordered locus">LOC_Os04g01280</name>
    <name evidence="11" type="ORF">OsJ_13499</name>
    <name evidence="10" type="ORF">OSJNBa0068L06.11</name>
    <name evidence="9" type="ORF">OSJNBa0094O15.1</name>
</gene>
<dbReference type="EC" id="2.4.-.-" evidence="6"/>
<dbReference type="EMBL" id="AL606442">
    <property type="protein sequence ID" value="CAE01585.2"/>
    <property type="molecule type" value="Genomic_DNA"/>
</dbReference>
<dbReference type="EMBL" id="AL662935">
    <property type="protein sequence ID" value="CAD39333.2"/>
    <property type="molecule type" value="Genomic_DNA"/>
</dbReference>
<dbReference type="EMBL" id="AP008210">
    <property type="protein sequence ID" value="BAF13911.1"/>
    <property type="molecule type" value="Genomic_DNA"/>
</dbReference>
<dbReference type="EMBL" id="AP014960">
    <property type="protein sequence ID" value="BAS87514.1"/>
    <property type="molecule type" value="Genomic_DNA"/>
</dbReference>
<dbReference type="EMBL" id="CM000141">
    <property type="protein sequence ID" value="EEE60368.1"/>
    <property type="molecule type" value="Genomic_DNA"/>
</dbReference>
<dbReference type="EMBL" id="AK070873">
    <property type="status" value="NOT_ANNOTATED_CDS"/>
    <property type="molecule type" value="mRNA"/>
</dbReference>
<dbReference type="RefSeq" id="XP_015636174.1">
    <property type="nucleotide sequence ID" value="XM_015780688.1"/>
</dbReference>
<dbReference type="SMR" id="Q7XTB2"/>
<dbReference type="FunCoup" id="Q7XTB2">
    <property type="interactions" value="422"/>
</dbReference>
<dbReference type="STRING" id="39947.Q7XTB2"/>
<dbReference type="CAZy" id="GT43">
    <property type="family name" value="Glycosyltransferase Family 43"/>
</dbReference>
<dbReference type="GlyCosmos" id="Q7XTB2">
    <property type="glycosylation" value="2 sites, No reported glycans"/>
</dbReference>
<dbReference type="PaxDb" id="39947-Q7XTB2"/>
<dbReference type="EnsemblPlants" id="Os04t0103100-01">
    <property type="protein sequence ID" value="Os04t0103100-01"/>
    <property type="gene ID" value="Os04g0103100"/>
</dbReference>
<dbReference type="Gramene" id="Os04t0103100-01">
    <property type="protein sequence ID" value="Os04t0103100-01"/>
    <property type="gene ID" value="Os04g0103100"/>
</dbReference>
<dbReference type="KEGG" id="dosa:Os04g0103100"/>
<dbReference type="eggNOG" id="KOG1476">
    <property type="taxonomic scope" value="Eukaryota"/>
</dbReference>
<dbReference type="HOGENOM" id="CLU_044006_1_0_1"/>
<dbReference type="InParanoid" id="Q7XTB2"/>
<dbReference type="OMA" id="HHHPFAS"/>
<dbReference type="OrthoDB" id="675023at2759"/>
<dbReference type="PlantReactome" id="R-OSA-5654909">
    <property type="pathway name" value="Xylan biosynthesis"/>
</dbReference>
<dbReference type="Proteomes" id="UP000000763">
    <property type="component" value="Chromosome 4"/>
</dbReference>
<dbReference type="Proteomes" id="UP000007752">
    <property type="component" value="Chromosome 4"/>
</dbReference>
<dbReference type="Proteomes" id="UP000059680">
    <property type="component" value="Chromosome 4"/>
</dbReference>
<dbReference type="ExpressionAtlas" id="Q7XTB2">
    <property type="expression patterns" value="baseline and differential"/>
</dbReference>
<dbReference type="GO" id="GO:0000139">
    <property type="term" value="C:Golgi membrane"/>
    <property type="evidence" value="ECO:0000314"/>
    <property type="project" value="UniProtKB"/>
</dbReference>
<dbReference type="GO" id="GO:0015018">
    <property type="term" value="F:galactosylgalactosylxylosylprotein 3-beta-glucuronosyltransferase activity"/>
    <property type="evidence" value="ECO:0007669"/>
    <property type="project" value="InterPro"/>
</dbReference>
<dbReference type="GO" id="GO:0042285">
    <property type="term" value="F:xylosyltransferase activity"/>
    <property type="evidence" value="ECO:0000318"/>
    <property type="project" value="GO_Central"/>
</dbReference>
<dbReference type="GO" id="GO:0071555">
    <property type="term" value="P:cell wall organization"/>
    <property type="evidence" value="ECO:0007669"/>
    <property type="project" value="UniProtKB-KW"/>
</dbReference>
<dbReference type="GO" id="GO:0010417">
    <property type="term" value="P:glucuronoxylan biosynthetic process"/>
    <property type="evidence" value="ECO:0000318"/>
    <property type="project" value="GO_Central"/>
</dbReference>
<dbReference type="GO" id="GO:0009834">
    <property type="term" value="P:plant-type secondary cell wall biogenesis"/>
    <property type="evidence" value="ECO:0000318"/>
    <property type="project" value="GO_Central"/>
</dbReference>
<dbReference type="FunFam" id="3.90.550.10:FF:000064">
    <property type="entry name" value="Glycosyltransferases"/>
    <property type="match status" value="1"/>
</dbReference>
<dbReference type="Gene3D" id="3.90.550.10">
    <property type="entry name" value="Spore Coat Polysaccharide Biosynthesis Protein SpsA, Chain A"/>
    <property type="match status" value="1"/>
</dbReference>
<dbReference type="InterPro" id="IPR005027">
    <property type="entry name" value="Glyco_trans_43"/>
</dbReference>
<dbReference type="InterPro" id="IPR029044">
    <property type="entry name" value="Nucleotide-diphossugar_trans"/>
</dbReference>
<dbReference type="PANTHER" id="PTHR10896">
    <property type="entry name" value="GALACTOSYLGALACTOSYLXYLOSYLPROTEIN 3-BETA-GLUCURONOSYLTRANSFERASE BETA-1,3-GLUCURONYLTRANSFERASE"/>
    <property type="match status" value="1"/>
</dbReference>
<dbReference type="PANTHER" id="PTHR10896:SF33">
    <property type="entry name" value="GLUCURONOSYLTRANSFERASE OS04G0103100-RELATED"/>
    <property type="match status" value="1"/>
</dbReference>
<dbReference type="Pfam" id="PF03360">
    <property type="entry name" value="Glyco_transf_43"/>
    <property type="match status" value="1"/>
</dbReference>
<dbReference type="SUPFAM" id="SSF53448">
    <property type="entry name" value="Nucleotide-diphospho-sugar transferases"/>
    <property type="match status" value="1"/>
</dbReference>